<reference key="1">
    <citation type="journal article" date="2000" name="Nature">
        <title>DNA sequence of both chromosomes of the cholera pathogen Vibrio cholerae.</title>
        <authorList>
            <person name="Heidelberg J.F."/>
            <person name="Eisen J.A."/>
            <person name="Nelson W.C."/>
            <person name="Clayton R.A."/>
            <person name="Gwinn M.L."/>
            <person name="Dodson R.J."/>
            <person name="Haft D.H."/>
            <person name="Hickey E.K."/>
            <person name="Peterson J.D."/>
            <person name="Umayam L.A."/>
            <person name="Gill S.R."/>
            <person name="Nelson K.E."/>
            <person name="Read T.D."/>
            <person name="Tettelin H."/>
            <person name="Richardson D.L."/>
            <person name="Ermolaeva M.D."/>
            <person name="Vamathevan J.J."/>
            <person name="Bass S."/>
            <person name="Qin H."/>
            <person name="Dragoi I."/>
            <person name="Sellers P."/>
            <person name="McDonald L.A."/>
            <person name="Utterback T.R."/>
            <person name="Fleischmann R.D."/>
            <person name="Nierman W.C."/>
            <person name="White O."/>
            <person name="Salzberg S.L."/>
            <person name="Smith H.O."/>
            <person name="Colwell R.R."/>
            <person name="Mekalanos J.J."/>
            <person name="Venter J.C."/>
            <person name="Fraser C.M."/>
        </authorList>
    </citation>
    <scope>NUCLEOTIDE SEQUENCE [LARGE SCALE GENOMIC DNA]</scope>
    <source>
        <strain>ATCC 39315 / El Tor Inaba N16961</strain>
    </source>
</reference>
<proteinExistence type="inferred from homology"/>
<sequence length="239" mass="27315">MSEVITQEYTEDGKVLRRIRSFVRREGRLTKGQEAAMKECWPTMGIDYQPELLDWQQVFGNDNPVVLEIGFGMGASLVEMAKNAPEKNFLGIEVHSPGVGACLASAREAGVTNLRVMCHDAVEVFAHMIPDNSLHTLQLFFPDPWHKKRHHKRRIVQLEFAEMVRQKLMIGSGVFHMATDWENYAEHMVEVMNQAPGFANLATDGDYVPRPDERPLTKFEQRGHRLGHGVWDIKYQRTA</sequence>
<evidence type="ECO:0000250" key="1"/>
<evidence type="ECO:0000255" key="2">
    <source>
        <dbReference type="HAMAP-Rule" id="MF_01057"/>
    </source>
</evidence>
<keyword id="KW-0489">Methyltransferase</keyword>
<keyword id="KW-1185">Reference proteome</keyword>
<keyword id="KW-0949">S-adenosyl-L-methionine</keyword>
<keyword id="KW-0808">Transferase</keyword>
<keyword id="KW-0819">tRNA processing</keyword>
<comment type="function">
    <text evidence="2">Catalyzes the formation of N(7)-methylguanine at position 46 (m7G46) in tRNA.</text>
</comment>
<comment type="catalytic activity">
    <reaction evidence="2">
        <text>guanosine(46) in tRNA + S-adenosyl-L-methionine = N(7)-methylguanosine(46) in tRNA + S-adenosyl-L-homocysteine</text>
        <dbReference type="Rhea" id="RHEA:42708"/>
        <dbReference type="Rhea" id="RHEA-COMP:10188"/>
        <dbReference type="Rhea" id="RHEA-COMP:10189"/>
        <dbReference type="ChEBI" id="CHEBI:57856"/>
        <dbReference type="ChEBI" id="CHEBI:59789"/>
        <dbReference type="ChEBI" id="CHEBI:74269"/>
        <dbReference type="ChEBI" id="CHEBI:74480"/>
        <dbReference type="EC" id="2.1.1.33"/>
    </reaction>
</comment>
<comment type="pathway">
    <text evidence="2">tRNA modification; N(7)-methylguanine-tRNA biosynthesis.</text>
</comment>
<comment type="similarity">
    <text evidence="2">Belongs to the class I-like SAM-binding methyltransferase superfamily. TrmB family.</text>
</comment>
<feature type="chain" id="PRO_0000171418" description="tRNA (guanine-N(7)-)-methyltransferase">
    <location>
        <begin position="1"/>
        <end position="239"/>
    </location>
</feature>
<feature type="active site" evidence="1">
    <location>
        <position position="143"/>
    </location>
</feature>
<feature type="binding site" evidence="2">
    <location>
        <position position="68"/>
    </location>
    <ligand>
        <name>S-adenosyl-L-methionine</name>
        <dbReference type="ChEBI" id="CHEBI:59789"/>
    </ligand>
</feature>
<feature type="binding site" evidence="2">
    <location>
        <position position="93"/>
    </location>
    <ligand>
        <name>S-adenosyl-L-methionine</name>
        <dbReference type="ChEBI" id="CHEBI:59789"/>
    </ligand>
</feature>
<feature type="binding site" evidence="2">
    <location>
        <position position="120"/>
    </location>
    <ligand>
        <name>S-adenosyl-L-methionine</name>
        <dbReference type="ChEBI" id="CHEBI:59789"/>
    </ligand>
</feature>
<feature type="binding site" evidence="2">
    <location>
        <position position="143"/>
    </location>
    <ligand>
        <name>S-adenosyl-L-methionine</name>
        <dbReference type="ChEBI" id="CHEBI:59789"/>
    </ligand>
</feature>
<feature type="binding site" evidence="2">
    <location>
        <position position="147"/>
    </location>
    <ligand>
        <name>substrate</name>
    </ligand>
</feature>
<feature type="binding site" evidence="2">
    <location>
        <position position="180"/>
    </location>
    <ligand>
        <name>substrate</name>
    </ligand>
</feature>
<feature type="binding site" evidence="2">
    <location>
        <begin position="217"/>
        <end position="220"/>
    </location>
    <ligand>
        <name>substrate</name>
    </ligand>
</feature>
<name>TRMB_VIBCH</name>
<organism>
    <name type="scientific">Vibrio cholerae serotype O1 (strain ATCC 39315 / El Tor Inaba N16961)</name>
    <dbReference type="NCBI Taxonomy" id="243277"/>
    <lineage>
        <taxon>Bacteria</taxon>
        <taxon>Pseudomonadati</taxon>
        <taxon>Pseudomonadota</taxon>
        <taxon>Gammaproteobacteria</taxon>
        <taxon>Vibrionales</taxon>
        <taxon>Vibrionaceae</taxon>
        <taxon>Vibrio</taxon>
    </lineage>
</organism>
<dbReference type="EC" id="2.1.1.33" evidence="2"/>
<dbReference type="EMBL" id="AE003852">
    <property type="protein sequence ID" value="AAF93626.1"/>
    <property type="molecule type" value="Genomic_DNA"/>
</dbReference>
<dbReference type="PIR" id="E82320">
    <property type="entry name" value="E82320"/>
</dbReference>
<dbReference type="RefSeq" id="NP_230107.1">
    <property type="nucleotide sequence ID" value="NC_002505.1"/>
</dbReference>
<dbReference type="RefSeq" id="WP_000005584.1">
    <property type="nucleotide sequence ID" value="NZ_LT906614.1"/>
</dbReference>
<dbReference type="SMR" id="Q9KUR2"/>
<dbReference type="STRING" id="243277.VC_0453"/>
<dbReference type="DNASU" id="2615115"/>
<dbReference type="EnsemblBacteria" id="AAF93626">
    <property type="protein sequence ID" value="AAF93626"/>
    <property type="gene ID" value="VC_0453"/>
</dbReference>
<dbReference type="KEGG" id="vch:VC_0453"/>
<dbReference type="PATRIC" id="fig|243277.26.peg.426"/>
<dbReference type="eggNOG" id="COG0220">
    <property type="taxonomic scope" value="Bacteria"/>
</dbReference>
<dbReference type="HOGENOM" id="CLU_050910_0_1_6"/>
<dbReference type="UniPathway" id="UPA00989"/>
<dbReference type="Proteomes" id="UP000000584">
    <property type="component" value="Chromosome 1"/>
</dbReference>
<dbReference type="GO" id="GO:0043527">
    <property type="term" value="C:tRNA methyltransferase complex"/>
    <property type="evidence" value="ECO:0000318"/>
    <property type="project" value="GO_Central"/>
</dbReference>
<dbReference type="GO" id="GO:0008176">
    <property type="term" value="F:tRNA (guanine(46)-N7)-methyltransferase activity"/>
    <property type="evidence" value="ECO:0000318"/>
    <property type="project" value="GO_Central"/>
</dbReference>
<dbReference type="GO" id="GO:0036265">
    <property type="term" value="P:RNA (guanine-N7)-methylation"/>
    <property type="evidence" value="ECO:0000318"/>
    <property type="project" value="GO_Central"/>
</dbReference>
<dbReference type="GO" id="GO:0030488">
    <property type="term" value="P:tRNA methylation"/>
    <property type="evidence" value="ECO:0000318"/>
    <property type="project" value="GO_Central"/>
</dbReference>
<dbReference type="FunFam" id="3.40.50.150:FF:000024">
    <property type="entry name" value="tRNA (guanine-N(7)-)-methyltransferase"/>
    <property type="match status" value="1"/>
</dbReference>
<dbReference type="Gene3D" id="3.40.50.150">
    <property type="entry name" value="Vaccinia Virus protein VP39"/>
    <property type="match status" value="1"/>
</dbReference>
<dbReference type="HAMAP" id="MF_01057">
    <property type="entry name" value="tRNA_methyltr_TrmB"/>
    <property type="match status" value="1"/>
</dbReference>
<dbReference type="InterPro" id="IPR029063">
    <property type="entry name" value="SAM-dependent_MTases_sf"/>
</dbReference>
<dbReference type="InterPro" id="IPR003358">
    <property type="entry name" value="tRNA_(Gua-N-7)_MeTrfase_Trmb"/>
</dbReference>
<dbReference type="InterPro" id="IPR055361">
    <property type="entry name" value="tRNA_methyltr_TrmB_bact"/>
</dbReference>
<dbReference type="NCBIfam" id="TIGR00091">
    <property type="entry name" value="tRNA (guanosine(46)-N7)-methyltransferase TrmB"/>
    <property type="match status" value="1"/>
</dbReference>
<dbReference type="PANTHER" id="PTHR23417">
    <property type="entry name" value="3-DEOXY-D-MANNO-OCTULOSONIC-ACID TRANSFERASE/TRNA GUANINE-N 7 - -METHYLTRANSFERASE"/>
    <property type="match status" value="1"/>
</dbReference>
<dbReference type="PANTHER" id="PTHR23417:SF14">
    <property type="entry name" value="PENTACOTRIPEPTIDE-REPEAT REGION OF PRORP DOMAIN-CONTAINING PROTEIN"/>
    <property type="match status" value="1"/>
</dbReference>
<dbReference type="Pfam" id="PF02390">
    <property type="entry name" value="Methyltransf_4"/>
    <property type="match status" value="1"/>
</dbReference>
<dbReference type="SUPFAM" id="SSF53335">
    <property type="entry name" value="S-adenosyl-L-methionine-dependent methyltransferases"/>
    <property type="match status" value="1"/>
</dbReference>
<dbReference type="PROSITE" id="PS51625">
    <property type="entry name" value="SAM_MT_TRMB"/>
    <property type="match status" value="1"/>
</dbReference>
<gene>
    <name evidence="2" type="primary">trmB</name>
    <name type="ordered locus">VC_0453</name>
</gene>
<accession>Q9KUR2</accession>
<protein>
    <recommendedName>
        <fullName evidence="2">tRNA (guanine-N(7)-)-methyltransferase</fullName>
        <ecNumber evidence="2">2.1.1.33</ecNumber>
    </recommendedName>
    <alternativeName>
        <fullName evidence="2">tRNA (guanine(46)-N(7))-methyltransferase</fullName>
    </alternativeName>
    <alternativeName>
        <fullName evidence="2">tRNA(m7G46)-methyltransferase</fullName>
    </alternativeName>
</protein>